<evidence type="ECO:0000255" key="1">
    <source>
        <dbReference type="HAMAP-Rule" id="MF_00636"/>
    </source>
</evidence>
<keyword id="KW-0067">ATP-binding</keyword>
<keyword id="KW-0342">GTP-binding</keyword>
<keyword id="KW-0547">Nucleotide-binding</keyword>
<reference key="1">
    <citation type="submission" date="2008-06" db="EMBL/GenBank/DDBJ databases">
        <title>Genome and proteome analysis of A. pleuropneumoniae serotype 7.</title>
        <authorList>
            <person name="Linke B."/>
            <person name="Buettner F."/>
            <person name="Martinez-Arias R."/>
            <person name="Goesmann A."/>
            <person name="Baltes N."/>
            <person name="Tegetmeyer H."/>
            <person name="Singh M."/>
            <person name="Gerlach G.F."/>
        </authorList>
    </citation>
    <scope>NUCLEOTIDE SEQUENCE [LARGE SCALE GENOMIC DNA]</scope>
    <source>
        <strain>AP76</strain>
    </source>
</reference>
<protein>
    <recommendedName>
        <fullName evidence="1">Nucleotide-binding protein APP7_0339</fullName>
    </recommendedName>
</protein>
<feature type="chain" id="PRO_1000130725" description="Nucleotide-binding protein APP7_0339">
    <location>
        <begin position="1"/>
        <end position="288"/>
    </location>
</feature>
<feature type="binding site" evidence="1">
    <location>
        <begin position="8"/>
        <end position="15"/>
    </location>
    <ligand>
        <name>ATP</name>
        <dbReference type="ChEBI" id="CHEBI:30616"/>
    </ligand>
</feature>
<feature type="binding site" evidence="1">
    <location>
        <begin position="56"/>
        <end position="59"/>
    </location>
    <ligand>
        <name>GTP</name>
        <dbReference type="ChEBI" id="CHEBI:37565"/>
    </ligand>
</feature>
<name>Y339_ACTP7</name>
<comment type="function">
    <text evidence="1">Displays ATPase and GTPase activities.</text>
</comment>
<comment type="similarity">
    <text evidence="1">Belongs to the RapZ-like family.</text>
</comment>
<dbReference type="EMBL" id="CP001091">
    <property type="protein sequence ID" value="ACE60991.1"/>
    <property type="molecule type" value="Genomic_DNA"/>
</dbReference>
<dbReference type="RefSeq" id="WP_005600433.1">
    <property type="nucleotide sequence ID" value="NC_010939.1"/>
</dbReference>
<dbReference type="SMR" id="B3H0H9"/>
<dbReference type="KEGG" id="apa:APP7_0339"/>
<dbReference type="HOGENOM" id="CLU_059558_1_1_6"/>
<dbReference type="Proteomes" id="UP000001226">
    <property type="component" value="Chromosome"/>
</dbReference>
<dbReference type="GO" id="GO:0005524">
    <property type="term" value="F:ATP binding"/>
    <property type="evidence" value="ECO:0007669"/>
    <property type="project" value="UniProtKB-UniRule"/>
</dbReference>
<dbReference type="GO" id="GO:0005525">
    <property type="term" value="F:GTP binding"/>
    <property type="evidence" value="ECO:0007669"/>
    <property type="project" value="UniProtKB-UniRule"/>
</dbReference>
<dbReference type="Gene3D" id="3.40.50.300">
    <property type="entry name" value="P-loop containing nucleotide triphosphate hydrolases"/>
    <property type="match status" value="1"/>
</dbReference>
<dbReference type="HAMAP" id="MF_00636">
    <property type="entry name" value="RapZ_like"/>
    <property type="match status" value="1"/>
</dbReference>
<dbReference type="InterPro" id="IPR027417">
    <property type="entry name" value="P-loop_NTPase"/>
</dbReference>
<dbReference type="InterPro" id="IPR005337">
    <property type="entry name" value="RapZ-like"/>
</dbReference>
<dbReference type="InterPro" id="IPR053930">
    <property type="entry name" value="RapZ-like_N"/>
</dbReference>
<dbReference type="InterPro" id="IPR053931">
    <property type="entry name" value="RapZ_C"/>
</dbReference>
<dbReference type="NCBIfam" id="NF003828">
    <property type="entry name" value="PRK05416.1"/>
    <property type="match status" value="1"/>
</dbReference>
<dbReference type="PANTHER" id="PTHR30448">
    <property type="entry name" value="RNASE ADAPTER PROTEIN RAPZ"/>
    <property type="match status" value="1"/>
</dbReference>
<dbReference type="PANTHER" id="PTHR30448:SF0">
    <property type="entry name" value="RNASE ADAPTER PROTEIN RAPZ"/>
    <property type="match status" value="1"/>
</dbReference>
<dbReference type="Pfam" id="PF22740">
    <property type="entry name" value="PapZ_C"/>
    <property type="match status" value="1"/>
</dbReference>
<dbReference type="Pfam" id="PF03668">
    <property type="entry name" value="RapZ-like_N"/>
    <property type="match status" value="1"/>
</dbReference>
<dbReference type="PIRSF" id="PIRSF005052">
    <property type="entry name" value="P-loopkin"/>
    <property type="match status" value="1"/>
</dbReference>
<dbReference type="SUPFAM" id="SSF52540">
    <property type="entry name" value="P-loop containing nucleoside triphosphate hydrolases"/>
    <property type="match status" value="1"/>
</dbReference>
<organism>
    <name type="scientific">Actinobacillus pleuropneumoniae serotype 7 (strain AP76)</name>
    <dbReference type="NCBI Taxonomy" id="537457"/>
    <lineage>
        <taxon>Bacteria</taxon>
        <taxon>Pseudomonadati</taxon>
        <taxon>Pseudomonadota</taxon>
        <taxon>Gammaproteobacteria</taxon>
        <taxon>Pasteurellales</taxon>
        <taxon>Pasteurellaceae</taxon>
        <taxon>Actinobacillus</taxon>
    </lineage>
</organism>
<sequence>MELIIISGRSGSGKSVALRALEDVGYYCVDNLPLPLIPELAGFLSNSGRSAVVSLDIRNIPENPESIEALLEQLSKLTIQTKIIFLDCERNTLIRRYSDTRRLHPLSNKDLSLESAIDLENTLLEPLYQQANYIIDTTNISSHELAENLRGILRGSTDKALKIVFESFGFKYGLPADADYVFDVRFLPNPHWNPELRPMTGLEQPVIDFLERQTEVHNFIYQTRNYLEMWLPMLEKNNRSYLTIAIGCTGGKHRSVFIAEQLAKYFQSRDKDVQIRHRSLEKHHKKIS</sequence>
<accession>B3H0H9</accession>
<gene>
    <name type="ordered locus">APP7_0339</name>
</gene>
<proteinExistence type="inferred from homology"/>